<dbReference type="EC" id="6.1.1.15" evidence="1"/>
<dbReference type="EMBL" id="CP000921">
    <property type="protein sequence ID" value="ACO23045.1"/>
    <property type="molecule type" value="Genomic_DNA"/>
</dbReference>
<dbReference type="RefSeq" id="WP_000814070.1">
    <property type="nucleotide sequence ID" value="NC_012469.1"/>
</dbReference>
<dbReference type="SMR" id="C1CPD8"/>
<dbReference type="KEGG" id="snt:SPT_0311"/>
<dbReference type="HOGENOM" id="CLU_016739_0_0_9"/>
<dbReference type="GO" id="GO:0005829">
    <property type="term" value="C:cytosol"/>
    <property type="evidence" value="ECO:0007669"/>
    <property type="project" value="TreeGrafter"/>
</dbReference>
<dbReference type="GO" id="GO:0002161">
    <property type="term" value="F:aminoacyl-tRNA deacylase activity"/>
    <property type="evidence" value="ECO:0007669"/>
    <property type="project" value="InterPro"/>
</dbReference>
<dbReference type="GO" id="GO:0005524">
    <property type="term" value="F:ATP binding"/>
    <property type="evidence" value="ECO:0007669"/>
    <property type="project" value="UniProtKB-UniRule"/>
</dbReference>
<dbReference type="GO" id="GO:0140096">
    <property type="term" value="F:catalytic activity, acting on a protein"/>
    <property type="evidence" value="ECO:0007669"/>
    <property type="project" value="UniProtKB-ARBA"/>
</dbReference>
<dbReference type="GO" id="GO:0004827">
    <property type="term" value="F:proline-tRNA ligase activity"/>
    <property type="evidence" value="ECO:0007669"/>
    <property type="project" value="UniProtKB-UniRule"/>
</dbReference>
<dbReference type="GO" id="GO:0016740">
    <property type="term" value="F:transferase activity"/>
    <property type="evidence" value="ECO:0007669"/>
    <property type="project" value="UniProtKB-ARBA"/>
</dbReference>
<dbReference type="GO" id="GO:0006433">
    <property type="term" value="P:prolyl-tRNA aminoacylation"/>
    <property type="evidence" value="ECO:0007669"/>
    <property type="project" value="UniProtKB-UniRule"/>
</dbReference>
<dbReference type="CDD" id="cd04334">
    <property type="entry name" value="ProRS-INS"/>
    <property type="match status" value="1"/>
</dbReference>
<dbReference type="CDD" id="cd00861">
    <property type="entry name" value="ProRS_anticodon_short"/>
    <property type="match status" value="1"/>
</dbReference>
<dbReference type="CDD" id="cd00779">
    <property type="entry name" value="ProRS_core_prok"/>
    <property type="match status" value="1"/>
</dbReference>
<dbReference type="FunFam" id="3.30.930.10:FF:000062">
    <property type="entry name" value="Proline--tRNA ligase"/>
    <property type="match status" value="1"/>
</dbReference>
<dbReference type="FunFam" id="3.30.930.10:FF:000070">
    <property type="entry name" value="Proline--tRNA ligase"/>
    <property type="match status" value="1"/>
</dbReference>
<dbReference type="FunFam" id="3.40.50.800:FF:000011">
    <property type="entry name" value="Proline--tRNA ligase"/>
    <property type="match status" value="1"/>
</dbReference>
<dbReference type="FunFam" id="3.90.960.10:FF:000004">
    <property type="entry name" value="Proline--tRNA ligase"/>
    <property type="match status" value="1"/>
</dbReference>
<dbReference type="Gene3D" id="3.40.50.800">
    <property type="entry name" value="Anticodon-binding domain"/>
    <property type="match status" value="1"/>
</dbReference>
<dbReference type="Gene3D" id="3.30.930.10">
    <property type="entry name" value="Bira Bifunctional Protein, Domain 2"/>
    <property type="match status" value="2"/>
</dbReference>
<dbReference type="Gene3D" id="3.90.960.10">
    <property type="entry name" value="YbaK/aminoacyl-tRNA synthetase-associated domain"/>
    <property type="match status" value="1"/>
</dbReference>
<dbReference type="HAMAP" id="MF_01569">
    <property type="entry name" value="Pro_tRNA_synth_type1"/>
    <property type="match status" value="1"/>
</dbReference>
<dbReference type="InterPro" id="IPR002314">
    <property type="entry name" value="aa-tRNA-synt_IIb"/>
</dbReference>
<dbReference type="InterPro" id="IPR006195">
    <property type="entry name" value="aa-tRNA-synth_II"/>
</dbReference>
<dbReference type="InterPro" id="IPR045864">
    <property type="entry name" value="aa-tRNA-synth_II/BPL/LPL"/>
</dbReference>
<dbReference type="InterPro" id="IPR004154">
    <property type="entry name" value="Anticodon-bd"/>
</dbReference>
<dbReference type="InterPro" id="IPR036621">
    <property type="entry name" value="Anticodon-bd_dom_sf"/>
</dbReference>
<dbReference type="InterPro" id="IPR002316">
    <property type="entry name" value="Pro-tRNA-ligase_IIa"/>
</dbReference>
<dbReference type="InterPro" id="IPR004500">
    <property type="entry name" value="Pro-tRNA-synth_IIa_bac-type"/>
</dbReference>
<dbReference type="InterPro" id="IPR023717">
    <property type="entry name" value="Pro-tRNA-Synthase_IIa_type1"/>
</dbReference>
<dbReference type="InterPro" id="IPR050062">
    <property type="entry name" value="Pro-tRNA_synthetase"/>
</dbReference>
<dbReference type="InterPro" id="IPR044140">
    <property type="entry name" value="ProRS_anticodon_short"/>
</dbReference>
<dbReference type="InterPro" id="IPR033730">
    <property type="entry name" value="ProRS_core_prok"/>
</dbReference>
<dbReference type="InterPro" id="IPR036754">
    <property type="entry name" value="YbaK/aa-tRNA-synt-asso_dom_sf"/>
</dbReference>
<dbReference type="InterPro" id="IPR007214">
    <property type="entry name" value="YbaK/aa-tRNA-synth-assoc-dom"/>
</dbReference>
<dbReference type="NCBIfam" id="NF006625">
    <property type="entry name" value="PRK09194.1"/>
    <property type="match status" value="1"/>
</dbReference>
<dbReference type="NCBIfam" id="TIGR00409">
    <property type="entry name" value="proS_fam_II"/>
    <property type="match status" value="2"/>
</dbReference>
<dbReference type="PANTHER" id="PTHR42753">
    <property type="entry name" value="MITOCHONDRIAL RIBOSOME PROTEIN L39/PROLYL-TRNA LIGASE FAMILY MEMBER"/>
    <property type="match status" value="1"/>
</dbReference>
<dbReference type="PANTHER" id="PTHR42753:SF2">
    <property type="entry name" value="PROLINE--TRNA LIGASE"/>
    <property type="match status" value="1"/>
</dbReference>
<dbReference type="Pfam" id="PF03129">
    <property type="entry name" value="HGTP_anticodon"/>
    <property type="match status" value="1"/>
</dbReference>
<dbReference type="Pfam" id="PF00587">
    <property type="entry name" value="tRNA-synt_2b"/>
    <property type="match status" value="1"/>
</dbReference>
<dbReference type="Pfam" id="PF04073">
    <property type="entry name" value="tRNA_edit"/>
    <property type="match status" value="1"/>
</dbReference>
<dbReference type="PRINTS" id="PR01046">
    <property type="entry name" value="TRNASYNTHPRO"/>
</dbReference>
<dbReference type="SUPFAM" id="SSF52954">
    <property type="entry name" value="Class II aaRS ABD-related"/>
    <property type="match status" value="1"/>
</dbReference>
<dbReference type="SUPFAM" id="SSF55681">
    <property type="entry name" value="Class II aaRS and biotin synthetases"/>
    <property type="match status" value="1"/>
</dbReference>
<dbReference type="SUPFAM" id="SSF55826">
    <property type="entry name" value="YbaK/ProRS associated domain"/>
    <property type="match status" value="1"/>
</dbReference>
<dbReference type="PROSITE" id="PS50862">
    <property type="entry name" value="AA_TRNA_LIGASE_II"/>
    <property type="match status" value="1"/>
</dbReference>
<comment type="function">
    <text evidence="1">Catalyzes the attachment of proline to tRNA(Pro) in a two-step reaction: proline is first activated by ATP to form Pro-AMP and then transferred to the acceptor end of tRNA(Pro). As ProRS can inadvertently accommodate and process non-cognate amino acids such as alanine and cysteine, to avoid such errors it has two additional distinct editing activities against alanine. One activity is designated as 'pretransfer' editing and involves the tRNA(Pro)-independent hydrolysis of activated Ala-AMP. The other activity is designated 'posttransfer' editing and involves deacylation of mischarged Ala-tRNA(Pro). The misacylated Cys-tRNA(Pro) is not edited by ProRS.</text>
</comment>
<comment type="catalytic activity">
    <reaction evidence="1">
        <text>tRNA(Pro) + L-proline + ATP = L-prolyl-tRNA(Pro) + AMP + diphosphate</text>
        <dbReference type="Rhea" id="RHEA:14305"/>
        <dbReference type="Rhea" id="RHEA-COMP:9700"/>
        <dbReference type="Rhea" id="RHEA-COMP:9702"/>
        <dbReference type="ChEBI" id="CHEBI:30616"/>
        <dbReference type="ChEBI" id="CHEBI:33019"/>
        <dbReference type="ChEBI" id="CHEBI:60039"/>
        <dbReference type="ChEBI" id="CHEBI:78442"/>
        <dbReference type="ChEBI" id="CHEBI:78532"/>
        <dbReference type="ChEBI" id="CHEBI:456215"/>
        <dbReference type="EC" id="6.1.1.15"/>
    </reaction>
</comment>
<comment type="subunit">
    <text evidence="1">Homodimer.</text>
</comment>
<comment type="subcellular location">
    <subcellularLocation>
        <location evidence="1">Cytoplasm</location>
    </subcellularLocation>
</comment>
<comment type="domain">
    <text evidence="1">Consists of three domains: the N-terminal catalytic domain, the editing domain and the C-terminal anticodon-binding domain.</text>
</comment>
<comment type="similarity">
    <text evidence="1">Belongs to the class-II aminoacyl-tRNA synthetase family. ProS type 1 subfamily.</text>
</comment>
<reference key="1">
    <citation type="journal article" date="2010" name="Genome Biol.">
        <title>Structure and dynamics of the pan-genome of Streptococcus pneumoniae and closely related species.</title>
        <authorList>
            <person name="Donati C."/>
            <person name="Hiller N.L."/>
            <person name="Tettelin H."/>
            <person name="Muzzi A."/>
            <person name="Croucher N.J."/>
            <person name="Angiuoli S.V."/>
            <person name="Oggioni M."/>
            <person name="Dunning Hotopp J.C."/>
            <person name="Hu F.Z."/>
            <person name="Riley D.R."/>
            <person name="Covacci A."/>
            <person name="Mitchell T.J."/>
            <person name="Bentley S.D."/>
            <person name="Kilian M."/>
            <person name="Ehrlich G.D."/>
            <person name="Rappuoli R."/>
            <person name="Moxon E.R."/>
            <person name="Masignani V."/>
        </authorList>
    </citation>
    <scope>NUCLEOTIDE SEQUENCE [LARGE SCALE GENOMIC DNA]</scope>
    <source>
        <strain>Taiwan19F-14</strain>
    </source>
</reference>
<sequence>MKQSKMPIPTLREMPSDAQVISHALMLRAGYVRQVSAGVYSYLPLANRVIEKAKNIMRQEFEKIGAVEMLAPALLSAELWRESGRYETYGEDLYKLKNREKSDFILGPTHEETFTAIVRDSVKSYKQLPLNLYQIQPKYRDEKRPRNGLLRTREFIMKDAYSFHANYDSLDSVYDEYKAAYERIFTRSGLDFKAIIGDGGAMGGKDSQEFMAITSARTDLDRWVVLDKSVASFDEIPAEVQEEIKAELLKWIVSGEDTIAYSSESSYAANLEMATNEYKPSNRVVAEEEVTRVATPDVKSIDEVAAFLNVPEEQTIKTLFYIADGELVAALLVGNDQLNEVKLKNHLGADFFDVASEEEVANVVQAGFGSLGPVGLPENIKIIADRKVQDVRNAVVGANEDGYHLTGVNPGRDFTAEYVDIREVREGEISPDGQGVLNFARGIEIGHIFKLGTRYSASMGADVLDENGRAVPIIMGCYGIGVSRLLSAVMEQHARLFVNKTPKGEYRYAWGINFPKELAPFDVHLITVNVKDEEAQALTEKLEASLMGAGYEVLTDDRNERVGVKFSDSDLIGLPIRITVGKKAADGIVEVKIKATGDTIEVHADNVLETLEILSKK</sequence>
<proteinExistence type="inferred from homology"/>
<organism>
    <name type="scientific">Streptococcus pneumoniae (strain Taiwan19F-14)</name>
    <dbReference type="NCBI Taxonomy" id="487213"/>
    <lineage>
        <taxon>Bacteria</taxon>
        <taxon>Bacillati</taxon>
        <taxon>Bacillota</taxon>
        <taxon>Bacilli</taxon>
        <taxon>Lactobacillales</taxon>
        <taxon>Streptococcaceae</taxon>
        <taxon>Streptococcus</taxon>
    </lineage>
</organism>
<protein>
    <recommendedName>
        <fullName evidence="1">Proline--tRNA ligase</fullName>
        <ecNumber evidence="1">6.1.1.15</ecNumber>
    </recommendedName>
    <alternativeName>
        <fullName evidence="1">Prolyl-tRNA synthetase</fullName>
        <shortName evidence="1">ProRS</shortName>
    </alternativeName>
</protein>
<feature type="chain" id="PRO_1000185518" description="Proline--tRNA ligase">
    <location>
        <begin position="1"/>
        <end position="617"/>
    </location>
</feature>
<name>SYP_STRZT</name>
<accession>C1CPD8</accession>
<keyword id="KW-0030">Aminoacyl-tRNA synthetase</keyword>
<keyword id="KW-0067">ATP-binding</keyword>
<keyword id="KW-0963">Cytoplasm</keyword>
<keyword id="KW-0436">Ligase</keyword>
<keyword id="KW-0547">Nucleotide-binding</keyword>
<keyword id="KW-0648">Protein biosynthesis</keyword>
<gene>
    <name evidence="1" type="primary">proS</name>
    <name type="ordered locus">SPT_0311</name>
</gene>
<evidence type="ECO:0000255" key="1">
    <source>
        <dbReference type="HAMAP-Rule" id="MF_01569"/>
    </source>
</evidence>